<organism>
    <name type="scientific">Salmonella typhi</name>
    <dbReference type="NCBI Taxonomy" id="90370"/>
    <lineage>
        <taxon>Bacteria</taxon>
        <taxon>Pseudomonadati</taxon>
        <taxon>Pseudomonadota</taxon>
        <taxon>Gammaproteobacteria</taxon>
        <taxon>Enterobacterales</taxon>
        <taxon>Enterobacteriaceae</taxon>
        <taxon>Salmonella</taxon>
    </lineage>
</organism>
<keyword id="KW-0002">3D-structure</keyword>
<keyword id="KW-0975">Bacterial flagellum</keyword>
<keyword id="KW-0997">Cell inner membrane</keyword>
<keyword id="KW-1003">Cell membrane</keyword>
<keyword id="KW-0472">Membrane</keyword>
<keyword id="KW-0812">Transmembrane</keyword>
<keyword id="KW-1133">Transmembrane helix</keyword>
<accession>P0A1L6</accession>
<accession>P54701</accession>
<evidence type="ECO:0000250" key="1"/>
<evidence type="ECO:0000255" key="2"/>
<evidence type="ECO:0000305" key="3"/>
<name>FLIQ_SALTI</name>
<reference key="1">
    <citation type="journal article" date="2001" name="Nature">
        <title>Complete genome sequence of a multiple drug resistant Salmonella enterica serovar Typhi CT18.</title>
        <authorList>
            <person name="Parkhill J."/>
            <person name="Dougan G."/>
            <person name="James K.D."/>
            <person name="Thomson N.R."/>
            <person name="Pickard D."/>
            <person name="Wain J."/>
            <person name="Churcher C.M."/>
            <person name="Mungall K.L."/>
            <person name="Bentley S.D."/>
            <person name="Holden M.T.G."/>
            <person name="Sebaihia M."/>
            <person name="Baker S."/>
            <person name="Basham D."/>
            <person name="Brooks K."/>
            <person name="Chillingworth T."/>
            <person name="Connerton P."/>
            <person name="Cronin A."/>
            <person name="Davis P."/>
            <person name="Davies R.M."/>
            <person name="Dowd L."/>
            <person name="White N."/>
            <person name="Farrar J."/>
            <person name="Feltwell T."/>
            <person name="Hamlin N."/>
            <person name="Haque A."/>
            <person name="Hien T.T."/>
            <person name="Holroyd S."/>
            <person name="Jagels K."/>
            <person name="Krogh A."/>
            <person name="Larsen T.S."/>
            <person name="Leather S."/>
            <person name="Moule S."/>
            <person name="O'Gaora P."/>
            <person name="Parry C."/>
            <person name="Quail M.A."/>
            <person name="Rutherford K.M."/>
            <person name="Simmonds M."/>
            <person name="Skelton J."/>
            <person name="Stevens K."/>
            <person name="Whitehead S."/>
            <person name="Barrell B.G."/>
        </authorList>
    </citation>
    <scope>NUCLEOTIDE SEQUENCE [LARGE SCALE GENOMIC DNA]</scope>
    <source>
        <strain>CT18</strain>
    </source>
</reference>
<reference key="2">
    <citation type="journal article" date="2003" name="J. Bacteriol.">
        <title>Comparative genomics of Salmonella enterica serovar Typhi strains Ty2 and CT18.</title>
        <authorList>
            <person name="Deng W."/>
            <person name="Liou S.-R."/>
            <person name="Plunkett G. III"/>
            <person name="Mayhew G.F."/>
            <person name="Rose D.J."/>
            <person name="Burland V."/>
            <person name="Kodoyianni V."/>
            <person name="Schwartz D.C."/>
            <person name="Blattner F.R."/>
        </authorList>
    </citation>
    <scope>NUCLEOTIDE SEQUENCE [LARGE SCALE GENOMIC DNA]</scope>
    <source>
        <strain>ATCC 700931 / Ty2</strain>
    </source>
</reference>
<protein>
    <recommendedName>
        <fullName>Flagellar biosynthetic protein FliQ</fullName>
    </recommendedName>
</protein>
<gene>
    <name type="primary">fliQ</name>
    <name type="synonym">flaQ</name>
    <name type="ordered locus">STY2188</name>
    <name type="ordered locus">t0897</name>
</gene>
<comment type="function">
    <text evidence="1">Required for the assembly of the rivet at the earliest stage of flagellar biosynthesis.</text>
</comment>
<comment type="subcellular location">
    <subcellularLocation>
        <location evidence="1">Cell inner membrane</location>
        <topology evidence="1">Multi-pass membrane protein</topology>
    </subcellularLocation>
    <subcellularLocation>
        <location evidence="1">Bacterial flagellum basal body</location>
    </subcellularLocation>
</comment>
<comment type="similarity">
    <text evidence="3">Belongs to the FliQ/MopD/SpaQ family.</text>
</comment>
<feature type="chain" id="PRO_0000129096" description="Flagellar biosynthetic protein FliQ">
    <location>
        <begin position="1"/>
        <end position="89"/>
    </location>
</feature>
<feature type="transmembrane region" description="Helical" evidence="2">
    <location>
        <begin position="18"/>
        <end position="38"/>
    </location>
</feature>
<feature type="transmembrane region" description="Helical" evidence="2">
    <location>
        <begin position="55"/>
        <end position="75"/>
    </location>
</feature>
<proteinExistence type="evidence at protein level"/>
<dbReference type="EMBL" id="AL513382">
    <property type="protein sequence ID" value="CAD05728.1"/>
    <property type="molecule type" value="Genomic_DNA"/>
</dbReference>
<dbReference type="EMBL" id="AE014613">
    <property type="protein sequence ID" value="AAO68575.1"/>
    <property type="molecule type" value="Genomic_DNA"/>
</dbReference>
<dbReference type="RefSeq" id="NP_456541.1">
    <property type="nucleotide sequence ID" value="NC_003198.1"/>
</dbReference>
<dbReference type="RefSeq" id="WP_000187355.1">
    <property type="nucleotide sequence ID" value="NZ_WSUR01000004.1"/>
</dbReference>
<dbReference type="PDB" id="6F2D">
    <property type="method" value="EM"/>
    <property type="resolution" value="4.20 A"/>
    <property type="chains" value="G/H/I/J=1-89"/>
</dbReference>
<dbReference type="PDBsum" id="6F2D"/>
<dbReference type="EMDB" id="EMD-4173"/>
<dbReference type="SMR" id="P0A1L6"/>
<dbReference type="STRING" id="220341.gene:17586096"/>
<dbReference type="GeneID" id="44980821"/>
<dbReference type="KEGG" id="stt:t0897"/>
<dbReference type="KEGG" id="sty:STY2188"/>
<dbReference type="PATRIC" id="fig|220341.7.peg.2203"/>
<dbReference type="eggNOG" id="COG1987">
    <property type="taxonomic scope" value="Bacteria"/>
</dbReference>
<dbReference type="HOGENOM" id="CLU_164516_2_0_6"/>
<dbReference type="OMA" id="EFTRYLW"/>
<dbReference type="Proteomes" id="UP000000541">
    <property type="component" value="Chromosome"/>
</dbReference>
<dbReference type="Proteomes" id="UP000002670">
    <property type="component" value="Chromosome"/>
</dbReference>
<dbReference type="GO" id="GO:0009425">
    <property type="term" value="C:bacterial-type flagellum basal body"/>
    <property type="evidence" value="ECO:0007669"/>
    <property type="project" value="UniProtKB-SubCell"/>
</dbReference>
<dbReference type="GO" id="GO:0005886">
    <property type="term" value="C:plasma membrane"/>
    <property type="evidence" value="ECO:0007669"/>
    <property type="project" value="UniProtKB-SubCell"/>
</dbReference>
<dbReference type="GO" id="GO:0044780">
    <property type="term" value="P:bacterial-type flagellum assembly"/>
    <property type="evidence" value="ECO:0007669"/>
    <property type="project" value="InterPro"/>
</dbReference>
<dbReference type="GO" id="GO:0009306">
    <property type="term" value="P:protein secretion"/>
    <property type="evidence" value="ECO:0007669"/>
    <property type="project" value="InterPro"/>
</dbReference>
<dbReference type="InterPro" id="IPR002191">
    <property type="entry name" value="Bac_export_3"/>
</dbReference>
<dbReference type="InterPro" id="IPR006305">
    <property type="entry name" value="FliQ"/>
</dbReference>
<dbReference type="NCBIfam" id="TIGR01402">
    <property type="entry name" value="fliQ"/>
    <property type="match status" value="1"/>
</dbReference>
<dbReference type="PANTHER" id="PTHR34040">
    <property type="entry name" value="FLAGELLAR BIOSYNTHETIC PROTEIN FLIQ"/>
    <property type="match status" value="1"/>
</dbReference>
<dbReference type="PANTHER" id="PTHR34040:SF2">
    <property type="entry name" value="FLAGELLAR BIOSYNTHETIC PROTEIN FLIQ"/>
    <property type="match status" value="1"/>
</dbReference>
<dbReference type="Pfam" id="PF01313">
    <property type="entry name" value="Bac_export_3"/>
    <property type="match status" value="1"/>
</dbReference>
<dbReference type="PIRSF" id="PIRSF004669">
    <property type="entry name" value="FliQ"/>
    <property type="match status" value="1"/>
</dbReference>
<dbReference type="PRINTS" id="PR00952">
    <property type="entry name" value="TYPE3IMQPROT"/>
</dbReference>
<sequence length="89" mass="9604">MTPESVMMMGTEAMKVALALAAPLLLVALITGLIISILQAATQINEMTLSFIPKIVAVFIAIIVAGPWMLNLLLDYVRTLFSNLPYIIG</sequence>